<sequence>MAHKKGVGSSRNGRDSEAKRLGVKAFGGELVSGGSIIVRQRGTKFHAGENTGLGKDHTIYAKVDGRVKFEVKGAFGRQYVSIIPA</sequence>
<organism>
    <name type="scientific">Cellvibrio japonicus (strain Ueda107)</name>
    <name type="common">Pseudomonas fluorescens subsp. cellulosa</name>
    <dbReference type="NCBI Taxonomy" id="498211"/>
    <lineage>
        <taxon>Bacteria</taxon>
        <taxon>Pseudomonadati</taxon>
        <taxon>Pseudomonadota</taxon>
        <taxon>Gammaproteobacteria</taxon>
        <taxon>Cellvibrionales</taxon>
        <taxon>Cellvibrionaceae</taxon>
        <taxon>Cellvibrio</taxon>
    </lineage>
</organism>
<evidence type="ECO:0000255" key="1">
    <source>
        <dbReference type="HAMAP-Rule" id="MF_00539"/>
    </source>
</evidence>
<evidence type="ECO:0000305" key="2"/>
<reference key="1">
    <citation type="journal article" date="2008" name="J. Bacteriol.">
        <title>Insights into plant cell wall degradation from the genome sequence of the soil bacterium Cellvibrio japonicus.</title>
        <authorList>
            <person name="DeBoy R.T."/>
            <person name="Mongodin E.F."/>
            <person name="Fouts D.E."/>
            <person name="Tailford L.E."/>
            <person name="Khouri H."/>
            <person name="Emerson J.B."/>
            <person name="Mohamoud Y."/>
            <person name="Watkins K."/>
            <person name="Henrissat B."/>
            <person name="Gilbert H.J."/>
            <person name="Nelson K.E."/>
        </authorList>
    </citation>
    <scope>NUCLEOTIDE SEQUENCE [LARGE SCALE GENOMIC DNA]</scope>
    <source>
        <strain>Ueda107</strain>
    </source>
</reference>
<dbReference type="EMBL" id="CP000934">
    <property type="protein sequence ID" value="ACE83451.1"/>
    <property type="molecule type" value="Genomic_DNA"/>
</dbReference>
<dbReference type="RefSeq" id="WP_012486139.1">
    <property type="nucleotide sequence ID" value="NC_010995.1"/>
</dbReference>
<dbReference type="SMR" id="B3PIU8"/>
<dbReference type="STRING" id="498211.CJA_0459"/>
<dbReference type="KEGG" id="cja:CJA_0459"/>
<dbReference type="eggNOG" id="COG0211">
    <property type="taxonomic scope" value="Bacteria"/>
</dbReference>
<dbReference type="HOGENOM" id="CLU_095424_4_1_6"/>
<dbReference type="OrthoDB" id="9803474at2"/>
<dbReference type="Proteomes" id="UP000001036">
    <property type="component" value="Chromosome"/>
</dbReference>
<dbReference type="GO" id="GO:0022625">
    <property type="term" value="C:cytosolic large ribosomal subunit"/>
    <property type="evidence" value="ECO:0007669"/>
    <property type="project" value="TreeGrafter"/>
</dbReference>
<dbReference type="GO" id="GO:0003735">
    <property type="term" value="F:structural constituent of ribosome"/>
    <property type="evidence" value="ECO:0007669"/>
    <property type="project" value="InterPro"/>
</dbReference>
<dbReference type="GO" id="GO:0006412">
    <property type="term" value="P:translation"/>
    <property type="evidence" value="ECO:0007669"/>
    <property type="project" value="UniProtKB-UniRule"/>
</dbReference>
<dbReference type="FunFam" id="2.40.50.100:FF:000020">
    <property type="entry name" value="50S ribosomal protein L27"/>
    <property type="match status" value="1"/>
</dbReference>
<dbReference type="Gene3D" id="2.40.50.100">
    <property type="match status" value="1"/>
</dbReference>
<dbReference type="HAMAP" id="MF_00539">
    <property type="entry name" value="Ribosomal_bL27"/>
    <property type="match status" value="1"/>
</dbReference>
<dbReference type="InterPro" id="IPR001684">
    <property type="entry name" value="Ribosomal_bL27"/>
</dbReference>
<dbReference type="InterPro" id="IPR018261">
    <property type="entry name" value="Ribosomal_bL27_CS"/>
</dbReference>
<dbReference type="NCBIfam" id="TIGR00062">
    <property type="entry name" value="L27"/>
    <property type="match status" value="1"/>
</dbReference>
<dbReference type="PANTHER" id="PTHR15893:SF0">
    <property type="entry name" value="LARGE RIBOSOMAL SUBUNIT PROTEIN BL27M"/>
    <property type="match status" value="1"/>
</dbReference>
<dbReference type="PANTHER" id="PTHR15893">
    <property type="entry name" value="RIBOSOMAL PROTEIN L27"/>
    <property type="match status" value="1"/>
</dbReference>
<dbReference type="Pfam" id="PF01016">
    <property type="entry name" value="Ribosomal_L27"/>
    <property type="match status" value="1"/>
</dbReference>
<dbReference type="PRINTS" id="PR00063">
    <property type="entry name" value="RIBOSOMALL27"/>
</dbReference>
<dbReference type="SUPFAM" id="SSF110324">
    <property type="entry name" value="Ribosomal L27 protein-like"/>
    <property type="match status" value="1"/>
</dbReference>
<dbReference type="PROSITE" id="PS00831">
    <property type="entry name" value="RIBOSOMAL_L27"/>
    <property type="match status" value="1"/>
</dbReference>
<gene>
    <name evidence="1" type="primary">rpmA</name>
    <name type="ordered locus">CJA_0459</name>
</gene>
<proteinExistence type="inferred from homology"/>
<keyword id="KW-1185">Reference proteome</keyword>
<keyword id="KW-0687">Ribonucleoprotein</keyword>
<keyword id="KW-0689">Ribosomal protein</keyword>
<protein>
    <recommendedName>
        <fullName evidence="1">Large ribosomal subunit protein bL27</fullName>
    </recommendedName>
    <alternativeName>
        <fullName evidence="2">50S ribosomal protein L27</fullName>
    </alternativeName>
</protein>
<comment type="similarity">
    <text evidence="1">Belongs to the bacterial ribosomal protein bL27 family.</text>
</comment>
<feature type="chain" id="PRO_1000128712" description="Large ribosomal subunit protein bL27">
    <location>
        <begin position="1"/>
        <end position="85"/>
    </location>
</feature>
<name>RL27_CELJU</name>
<accession>B3PIU8</accession>